<comment type="function">
    <text evidence="1">Aquaporins facilitate the transport of water and small neutral solutes across cell membranes.</text>
</comment>
<comment type="subcellular location">
    <subcellularLocation>
        <location evidence="3">Membrane</location>
        <topology evidence="3">Multi-pass membrane protein</topology>
    </subcellularLocation>
</comment>
<comment type="domain">
    <text>Aquaporins contain two tandem repeats each containing three membrane-spanning domains and a pore-forming loop with the signature motif Asn-Pro-Ala (NPA).</text>
</comment>
<comment type="similarity">
    <text evidence="3">Belongs to the MIP/aquaporin (TC 1.A.8) family. SIP (TC 1.A.8.10) subfamily.</text>
</comment>
<accession>Q9ATM3</accession>
<proteinExistence type="evidence at transcript level"/>
<organism>
    <name type="scientific">Zea mays</name>
    <name type="common">Maize</name>
    <dbReference type="NCBI Taxonomy" id="4577"/>
    <lineage>
        <taxon>Eukaryota</taxon>
        <taxon>Viridiplantae</taxon>
        <taxon>Streptophyta</taxon>
        <taxon>Embryophyta</taxon>
        <taxon>Tracheophyta</taxon>
        <taxon>Spermatophyta</taxon>
        <taxon>Magnoliopsida</taxon>
        <taxon>Liliopsida</taxon>
        <taxon>Poales</taxon>
        <taxon>Poaceae</taxon>
        <taxon>PACMAD clade</taxon>
        <taxon>Panicoideae</taxon>
        <taxon>Andropogonodae</taxon>
        <taxon>Andropogoneae</taxon>
        <taxon>Tripsacinae</taxon>
        <taxon>Zea</taxon>
    </lineage>
</organism>
<dbReference type="EMBL" id="AF326497">
    <property type="protein sequence ID" value="AAK26764.1"/>
    <property type="molecule type" value="mRNA"/>
</dbReference>
<dbReference type="RefSeq" id="NP_001105514.1">
    <property type="nucleotide sequence ID" value="NM_001112044.1"/>
</dbReference>
<dbReference type="SMR" id="Q9ATM3"/>
<dbReference type="STRING" id="4577.Q9ATM3"/>
<dbReference type="PaxDb" id="4577-GRMZM2G113470_P01"/>
<dbReference type="EnsemblPlants" id="Zm00001eb167790_T001">
    <property type="protein sequence ID" value="Zm00001eb167790_P001"/>
    <property type="gene ID" value="Zm00001eb167790"/>
</dbReference>
<dbReference type="GeneID" id="542494"/>
<dbReference type="Gramene" id="Zm00001eb167790_T001">
    <property type="protein sequence ID" value="Zm00001eb167790_P001"/>
    <property type="gene ID" value="Zm00001eb167790"/>
</dbReference>
<dbReference type="KEGG" id="zma:542494"/>
<dbReference type="MaizeGDB" id="403431"/>
<dbReference type="eggNOG" id="KOG0223">
    <property type="taxonomic scope" value="Eukaryota"/>
</dbReference>
<dbReference type="HOGENOM" id="CLU_100006_0_0_1"/>
<dbReference type="InParanoid" id="Q9ATM3"/>
<dbReference type="OrthoDB" id="3222at2759"/>
<dbReference type="Proteomes" id="UP000007305">
    <property type="component" value="Chromosome 4"/>
</dbReference>
<dbReference type="ExpressionAtlas" id="Q9ATM3">
    <property type="expression patterns" value="baseline and differential"/>
</dbReference>
<dbReference type="GO" id="GO:0016020">
    <property type="term" value="C:membrane"/>
    <property type="evidence" value="ECO:0007669"/>
    <property type="project" value="UniProtKB-SubCell"/>
</dbReference>
<dbReference type="GO" id="GO:0015250">
    <property type="term" value="F:water channel activity"/>
    <property type="evidence" value="ECO:0007669"/>
    <property type="project" value="InterPro"/>
</dbReference>
<dbReference type="FunFam" id="1.20.1080.10:FF:000043">
    <property type="entry name" value="Aquaporin SIP1-1"/>
    <property type="match status" value="1"/>
</dbReference>
<dbReference type="Gene3D" id="1.20.1080.10">
    <property type="entry name" value="Glycerol uptake facilitator protein"/>
    <property type="match status" value="1"/>
</dbReference>
<dbReference type="InterPro" id="IPR023271">
    <property type="entry name" value="Aquaporin-like"/>
</dbReference>
<dbReference type="InterPro" id="IPR000425">
    <property type="entry name" value="MIP"/>
</dbReference>
<dbReference type="InterPro" id="IPR044222">
    <property type="entry name" value="SIP1-1/2-like"/>
</dbReference>
<dbReference type="PANTHER" id="PTHR46739">
    <property type="entry name" value="AQUAPORIN SIP1-1"/>
    <property type="match status" value="1"/>
</dbReference>
<dbReference type="PANTHER" id="PTHR46739:SF8">
    <property type="entry name" value="AQUAPORIN SIP1-1"/>
    <property type="match status" value="1"/>
</dbReference>
<dbReference type="Pfam" id="PF00230">
    <property type="entry name" value="MIP"/>
    <property type="match status" value="1"/>
</dbReference>
<dbReference type="PRINTS" id="PR00783">
    <property type="entry name" value="MINTRINSICP"/>
</dbReference>
<dbReference type="SUPFAM" id="SSF81338">
    <property type="entry name" value="Aquaporin-like"/>
    <property type="match status" value="1"/>
</dbReference>
<protein>
    <recommendedName>
        <fullName>Aquaporin SIP1-1</fullName>
    </recommendedName>
    <alternativeName>
        <fullName>Small basic intrinsic protein 1-1</fullName>
    </alternativeName>
    <alternativeName>
        <fullName>ZmSIP1-1</fullName>
    </alternativeName>
    <alternativeName>
        <fullName>ZmSIP1;1</fullName>
    </alternativeName>
</protein>
<feature type="chain" id="PRO_0000286039" description="Aquaporin SIP1-1">
    <location>
        <begin position="1"/>
        <end position="245"/>
    </location>
</feature>
<feature type="transmembrane region" description="Helical; Name=1" evidence="2">
    <location>
        <begin position="14"/>
        <end position="34"/>
    </location>
</feature>
<feature type="transmembrane region" description="Helical; Name=2" evidence="2">
    <location>
        <begin position="55"/>
        <end position="75"/>
    </location>
</feature>
<feature type="transmembrane region" description="Helical; Name=3" evidence="2">
    <location>
        <begin position="100"/>
        <end position="120"/>
    </location>
</feature>
<feature type="transmembrane region" description="Helical; Name=4" evidence="2">
    <location>
        <begin position="138"/>
        <end position="158"/>
    </location>
</feature>
<feature type="transmembrane region" description="Helical; Name=5" evidence="2">
    <location>
        <begin position="164"/>
        <end position="184"/>
    </location>
</feature>
<feature type="transmembrane region" description="Helical; Name=6" evidence="2">
    <location>
        <begin position="213"/>
        <end position="233"/>
    </location>
</feature>
<feature type="short sequence motif" description="NPA 1" evidence="1">
    <location>
        <begin position="76"/>
        <end position="78"/>
    </location>
</feature>
<feature type="short sequence motif" description="NPA 2" evidence="1">
    <location>
        <begin position="191"/>
        <end position="193"/>
    </location>
</feature>
<reference key="1">
    <citation type="journal article" date="2001" name="Plant Physiol.">
        <title>Aquaporins constitute a large and highly divergent protein family in maize.</title>
        <authorList>
            <person name="Chaumont F."/>
            <person name="Barrieu F."/>
            <person name="Wojcik E."/>
            <person name="Chrispeels M.J."/>
            <person name="Jung R."/>
        </authorList>
    </citation>
    <scope>NUCLEOTIDE SEQUENCE [MRNA]</scope>
    <scope>GENE FAMILY</scope>
    <scope>NOMENCLATURE</scope>
    <source>
        <strain>cv. B73</strain>
    </source>
</reference>
<sequence length="245" mass="25623">MAMGATVRAAAADAVVTFLWVLCASALGASTAAVTSYLGVQEGAGHYALLVTTSLLSVLLFTFDLLCGALGGASFNPTDFAASYAAGLDSPSLFSVALRFPAQAAGAVGGALAISELMPAQYKHTLAGPSLKVDPHTGALAEGVLTFVITLTVLWVIVKGPRNVILKTLLLSTSIVSVILAGAEYTGPSMNPANAFGWAYVNNWHNTWEQLYVYWICPFIGAMLAGWIFRVVFLPPAPKPKTKKA</sequence>
<name>SIP11_MAIZE</name>
<keyword id="KW-0472">Membrane</keyword>
<keyword id="KW-1185">Reference proteome</keyword>
<keyword id="KW-0677">Repeat</keyword>
<keyword id="KW-0812">Transmembrane</keyword>
<keyword id="KW-1133">Transmembrane helix</keyword>
<keyword id="KW-0813">Transport</keyword>
<evidence type="ECO:0000250" key="1"/>
<evidence type="ECO:0000255" key="2"/>
<evidence type="ECO:0000305" key="3"/>
<gene>
    <name type="primary">SIP1-1</name>
    <name type="synonym">SIP1A</name>
</gene>